<proteinExistence type="inferred from homology"/>
<keyword id="KW-0028">Amino-acid biosynthesis</keyword>
<keyword id="KW-0067">ATP-binding</keyword>
<keyword id="KW-0963">Cytoplasm</keyword>
<keyword id="KW-0418">Kinase</keyword>
<keyword id="KW-0547">Nucleotide-binding</keyword>
<keyword id="KW-0641">Proline biosynthesis</keyword>
<keyword id="KW-1185">Reference proteome</keyword>
<keyword id="KW-0808">Transferase</keyword>
<accession>Q890J5</accession>
<accession>F9US46</accession>
<feature type="chain" id="PRO_0000109683" description="Glutamate 5-kinase">
    <location>
        <begin position="1"/>
        <end position="265"/>
    </location>
</feature>
<feature type="binding site" evidence="1">
    <location>
        <position position="15"/>
    </location>
    <ligand>
        <name>ATP</name>
        <dbReference type="ChEBI" id="CHEBI:30616"/>
    </ligand>
</feature>
<feature type="binding site" evidence="1">
    <location>
        <position position="55"/>
    </location>
    <ligand>
        <name>substrate</name>
    </ligand>
</feature>
<feature type="binding site" evidence="1">
    <location>
        <position position="142"/>
    </location>
    <ligand>
        <name>substrate</name>
    </ligand>
</feature>
<feature type="binding site" evidence="1">
    <location>
        <position position="158"/>
    </location>
    <ligand>
        <name>substrate</name>
    </ligand>
</feature>
<feature type="binding site" evidence="1">
    <location>
        <begin position="178"/>
        <end position="179"/>
    </location>
    <ligand>
        <name>ATP</name>
        <dbReference type="ChEBI" id="CHEBI:30616"/>
    </ligand>
</feature>
<feature type="binding site" evidence="1">
    <location>
        <begin position="220"/>
        <end position="226"/>
    </location>
    <ligand>
        <name>ATP</name>
        <dbReference type="ChEBI" id="CHEBI:30616"/>
    </ligand>
</feature>
<dbReference type="EC" id="2.7.2.11" evidence="1"/>
<dbReference type="EMBL" id="AL935263">
    <property type="protein sequence ID" value="CCC77593.1"/>
    <property type="molecule type" value="Genomic_DNA"/>
</dbReference>
<dbReference type="RefSeq" id="WP_003643611.1">
    <property type="nucleotide sequence ID" value="NC_004567.2"/>
</dbReference>
<dbReference type="RefSeq" id="YP_004888107.1">
    <property type="nucleotide sequence ID" value="NC_004567.2"/>
</dbReference>
<dbReference type="SMR" id="Q890J5"/>
<dbReference type="STRING" id="220668.lp_0016"/>
<dbReference type="EnsemblBacteria" id="CCC77593">
    <property type="protein sequence ID" value="CCC77593"/>
    <property type="gene ID" value="lp_0016"/>
</dbReference>
<dbReference type="GeneID" id="77216697"/>
<dbReference type="KEGG" id="lpl:lp_0016"/>
<dbReference type="PATRIC" id="fig|220668.9.peg.14"/>
<dbReference type="eggNOG" id="COG0263">
    <property type="taxonomic scope" value="Bacteria"/>
</dbReference>
<dbReference type="HOGENOM" id="CLU_025400_0_2_9"/>
<dbReference type="OrthoDB" id="9804434at2"/>
<dbReference type="PhylomeDB" id="Q890J5"/>
<dbReference type="UniPathway" id="UPA00098">
    <property type="reaction ID" value="UER00359"/>
</dbReference>
<dbReference type="Proteomes" id="UP000000432">
    <property type="component" value="Chromosome"/>
</dbReference>
<dbReference type="GO" id="GO:0005829">
    <property type="term" value="C:cytosol"/>
    <property type="evidence" value="ECO:0007669"/>
    <property type="project" value="TreeGrafter"/>
</dbReference>
<dbReference type="GO" id="GO:0005524">
    <property type="term" value="F:ATP binding"/>
    <property type="evidence" value="ECO:0007669"/>
    <property type="project" value="UniProtKB-KW"/>
</dbReference>
<dbReference type="GO" id="GO:0004349">
    <property type="term" value="F:glutamate 5-kinase activity"/>
    <property type="evidence" value="ECO:0007669"/>
    <property type="project" value="UniProtKB-UniRule"/>
</dbReference>
<dbReference type="GO" id="GO:0055129">
    <property type="term" value="P:L-proline biosynthetic process"/>
    <property type="evidence" value="ECO:0007669"/>
    <property type="project" value="UniProtKB-UniRule"/>
</dbReference>
<dbReference type="CDD" id="cd04242">
    <property type="entry name" value="AAK_G5K_ProB"/>
    <property type="match status" value="1"/>
</dbReference>
<dbReference type="FunFam" id="3.40.1160.10:FF:000018">
    <property type="entry name" value="Glutamate 5-kinase"/>
    <property type="match status" value="1"/>
</dbReference>
<dbReference type="Gene3D" id="3.40.1160.10">
    <property type="entry name" value="Acetylglutamate kinase-like"/>
    <property type="match status" value="1"/>
</dbReference>
<dbReference type="HAMAP" id="MF_00456">
    <property type="entry name" value="ProB"/>
    <property type="match status" value="1"/>
</dbReference>
<dbReference type="InterPro" id="IPR036393">
    <property type="entry name" value="AceGlu_kinase-like_sf"/>
</dbReference>
<dbReference type="InterPro" id="IPR001048">
    <property type="entry name" value="Asp/Glu/Uridylate_kinase"/>
</dbReference>
<dbReference type="InterPro" id="IPR041739">
    <property type="entry name" value="G5K_ProB"/>
</dbReference>
<dbReference type="InterPro" id="IPR001057">
    <property type="entry name" value="Glu/AcGlu_kinase"/>
</dbReference>
<dbReference type="InterPro" id="IPR011529">
    <property type="entry name" value="Glu_5kinase"/>
</dbReference>
<dbReference type="InterPro" id="IPR005715">
    <property type="entry name" value="Glu_5kinase/COase_Synthase"/>
</dbReference>
<dbReference type="InterPro" id="IPR019797">
    <property type="entry name" value="Glutamate_5-kinase_CS"/>
</dbReference>
<dbReference type="NCBIfam" id="TIGR01027">
    <property type="entry name" value="proB"/>
    <property type="match status" value="1"/>
</dbReference>
<dbReference type="PANTHER" id="PTHR43654">
    <property type="entry name" value="GLUTAMATE 5-KINASE"/>
    <property type="match status" value="1"/>
</dbReference>
<dbReference type="PANTHER" id="PTHR43654:SF1">
    <property type="entry name" value="ISOPENTENYL PHOSPHATE KINASE"/>
    <property type="match status" value="1"/>
</dbReference>
<dbReference type="Pfam" id="PF00696">
    <property type="entry name" value="AA_kinase"/>
    <property type="match status" value="1"/>
</dbReference>
<dbReference type="PIRSF" id="PIRSF000729">
    <property type="entry name" value="GK"/>
    <property type="match status" value="1"/>
</dbReference>
<dbReference type="PRINTS" id="PR00474">
    <property type="entry name" value="GLU5KINASE"/>
</dbReference>
<dbReference type="SUPFAM" id="SSF53633">
    <property type="entry name" value="Carbamate kinase-like"/>
    <property type="match status" value="1"/>
</dbReference>
<dbReference type="PROSITE" id="PS00902">
    <property type="entry name" value="GLUTAMATE_5_KINASE"/>
    <property type="match status" value="1"/>
</dbReference>
<organism>
    <name type="scientific">Lactiplantibacillus plantarum (strain ATCC BAA-793 / NCIMB 8826 / WCFS1)</name>
    <name type="common">Lactobacillus plantarum</name>
    <dbReference type="NCBI Taxonomy" id="220668"/>
    <lineage>
        <taxon>Bacteria</taxon>
        <taxon>Bacillati</taxon>
        <taxon>Bacillota</taxon>
        <taxon>Bacilli</taxon>
        <taxon>Lactobacillales</taxon>
        <taxon>Lactobacillaceae</taxon>
        <taxon>Lactiplantibacillus</taxon>
    </lineage>
</organism>
<protein>
    <recommendedName>
        <fullName evidence="1">Glutamate 5-kinase</fullName>
        <ecNumber evidence="1">2.7.2.11</ecNumber>
    </recommendedName>
    <alternativeName>
        <fullName evidence="1">Gamma-glutamyl kinase</fullName>
        <shortName evidence="1">GK</shortName>
    </alternativeName>
</protein>
<evidence type="ECO:0000255" key="1">
    <source>
        <dbReference type="HAMAP-Rule" id="MF_00456"/>
    </source>
</evidence>
<reference key="1">
    <citation type="journal article" date="2003" name="Proc. Natl. Acad. Sci. U.S.A.">
        <title>Complete genome sequence of Lactobacillus plantarum WCFS1.</title>
        <authorList>
            <person name="Kleerebezem M."/>
            <person name="Boekhorst J."/>
            <person name="van Kranenburg R."/>
            <person name="Molenaar D."/>
            <person name="Kuipers O.P."/>
            <person name="Leer R."/>
            <person name="Tarchini R."/>
            <person name="Peters S.A."/>
            <person name="Sandbrink H.M."/>
            <person name="Fiers M.W.E.J."/>
            <person name="Stiekema W."/>
            <person name="Klein Lankhorst R.M."/>
            <person name="Bron P.A."/>
            <person name="Hoffer S.M."/>
            <person name="Nierop Groot M.N."/>
            <person name="Kerkhoven R."/>
            <person name="De Vries M."/>
            <person name="Ursing B."/>
            <person name="De Vos W.M."/>
            <person name="Siezen R.J."/>
        </authorList>
    </citation>
    <scope>NUCLEOTIDE SEQUENCE [LARGE SCALE GENOMIC DNA]</scope>
    <source>
        <strain>ATCC BAA-793 / NCIMB 8826 / WCFS1</strain>
    </source>
</reference>
<reference key="2">
    <citation type="journal article" date="2012" name="J. Bacteriol.">
        <title>Complete resequencing and reannotation of the Lactobacillus plantarum WCFS1 genome.</title>
        <authorList>
            <person name="Siezen R.J."/>
            <person name="Francke C."/>
            <person name="Renckens B."/>
            <person name="Boekhorst J."/>
            <person name="Wels M."/>
            <person name="Kleerebezem M."/>
            <person name="van Hijum S.A."/>
        </authorList>
    </citation>
    <scope>NUCLEOTIDE SEQUENCE [LARGE SCALE GENOMIC DNA]</scope>
    <scope>GENOME REANNOTATION</scope>
    <source>
        <strain>ATCC BAA-793 / NCIMB 8826 / WCFS1</strain>
    </source>
</reference>
<comment type="function">
    <text evidence="1">Catalyzes the transfer of a phosphate group to glutamate to form L-glutamate 5-phosphate.</text>
</comment>
<comment type="catalytic activity">
    <reaction evidence="1">
        <text>L-glutamate + ATP = L-glutamyl 5-phosphate + ADP</text>
        <dbReference type="Rhea" id="RHEA:14877"/>
        <dbReference type="ChEBI" id="CHEBI:29985"/>
        <dbReference type="ChEBI" id="CHEBI:30616"/>
        <dbReference type="ChEBI" id="CHEBI:58274"/>
        <dbReference type="ChEBI" id="CHEBI:456216"/>
        <dbReference type="EC" id="2.7.2.11"/>
    </reaction>
</comment>
<comment type="pathway">
    <text evidence="1">Amino-acid biosynthesis; L-proline biosynthesis; L-glutamate 5-semialdehyde from L-glutamate: step 1/2.</text>
</comment>
<comment type="subcellular location">
    <subcellularLocation>
        <location evidence="1">Cytoplasm</location>
    </subcellularLocation>
</comment>
<comment type="similarity">
    <text evidence="1">Belongs to the glutamate 5-kinase family.</text>
</comment>
<gene>
    <name evidence="1" type="primary">proB</name>
    <name type="ordered locus">lp_0016</name>
</gene>
<name>PROB_LACPL</name>
<sequence>MKVIRKLKAKRVVIKVGTSTLVYPDGSINLRAIDQLAFVISAMRHRGREVVLVSSGAIGVGLNYMGLKQRPKAIPEQQAIAAIGQTELISIYKERFAIYEQKIGQLLLTRDIFVYPKSHHNVLNTFEALLKQNVVPIVNENDTVAVDELDHETKFGDNDQLSAIVATNIGADLLIMLSDIDGFYDGNPNADARAQLLGHIEKVDQHTYKLAGGSGSRFGTGGMVTKLKAAERMIDANGQMILANGADPTIIFQILAGEPVGTLFG</sequence>